<proteinExistence type="inferred from homology"/>
<accession>A4R5B8</accession>
<accession>G4NF96</accession>
<comment type="function">
    <text evidence="1">ATP-binding RNA helicase involved in the biogenesis of 60S ribosomal subunits and is required for the normal formation of 25S and 5.8S rRNAs.</text>
</comment>
<comment type="catalytic activity">
    <reaction>
        <text>ATP + H2O = ADP + phosphate + H(+)</text>
        <dbReference type="Rhea" id="RHEA:13065"/>
        <dbReference type="ChEBI" id="CHEBI:15377"/>
        <dbReference type="ChEBI" id="CHEBI:15378"/>
        <dbReference type="ChEBI" id="CHEBI:30616"/>
        <dbReference type="ChEBI" id="CHEBI:43474"/>
        <dbReference type="ChEBI" id="CHEBI:456216"/>
        <dbReference type="EC" id="3.6.4.13"/>
    </reaction>
</comment>
<comment type="subcellular location">
    <subcellularLocation>
        <location evidence="1">Nucleus</location>
        <location evidence="1">Nucleolus</location>
    </subcellularLocation>
</comment>
<comment type="domain">
    <text>The Q motif is unique to and characteristic of the DEAD box family of RNA helicases and controls ATP binding and hydrolysis.</text>
</comment>
<comment type="similarity">
    <text evidence="5">Belongs to the DEAD box helicase family. DDX54/DBP10 subfamily.</text>
</comment>
<organism>
    <name type="scientific">Pyricularia oryzae (strain 70-15 / ATCC MYA-4617 / FGSC 8958)</name>
    <name type="common">Rice blast fungus</name>
    <name type="synonym">Magnaporthe oryzae</name>
    <dbReference type="NCBI Taxonomy" id="242507"/>
    <lineage>
        <taxon>Eukaryota</taxon>
        <taxon>Fungi</taxon>
        <taxon>Dikarya</taxon>
        <taxon>Ascomycota</taxon>
        <taxon>Pezizomycotina</taxon>
        <taxon>Sordariomycetes</taxon>
        <taxon>Sordariomycetidae</taxon>
        <taxon>Magnaporthales</taxon>
        <taxon>Pyriculariaceae</taxon>
        <taxon>Pyricularia</taxon>
    </lineage>
</organism>
<dbReference type="EC" id="3.6.4.13"/>
<dbReference type="EMBL" id="CM001236">
    <property type="protein sequence ID" value="EHA47278.1"/>
    <property type="molecule type" value="Genomic_DNA"/>
</dbReference>
<dbReference type="RefSeq" id="XP_003719645.1">
    <property type="nucleotide sequence ID" value="XM_003719597.1"/>
</dbReference>
<dbReference type="SMR" id="A4R5B8"/>
<dbReference type="FunCoup" id="A4R5B8">
    <property type="interactions" value="1042"/>
</dbReference>
<dbReference type="STRING" id="242507.A4R5B8"/>
<dbReference type="EnsemblFungi" id="MGG_04179T0">
    <property type="protein sequence ID" value="MGG_04179T0"/>
    <property type="gene ID" value="MGG_04179"/>
</dbReference>
<dbReference type="GeneID" id="2677688"/>
<dbReference type="KEGG" id="mgr:MGG_04179"/>
<dbReference type="VEuPathDB" id="FungiDB:MGG_04179"/>
<dbReference type="eggNOG" id="KOG0337">
    <property type="taxonomic scope" value="Eukaryota"/>
</dbReference>
<dbReference type="HOGENOM" id="CLU_003041_5_0_1"/>
<dbReference type="InParanoid" id="A4R5B8"/>
<dbReference type="OMA" id="EDQFGMM"/>
<dbReference type="OrthoDB" id="10261375at2759"/>
<dbReference type="Proteomes" id="UP000009058">
    <property type="component" value="Chromosome 6"/>
</dbReference>
<dbReference type="GO" id="GO:0005829">
    <property type="term" value="C:cytosol"/>
    <property type="evidence" value="ECO:0007669"/>
    <property type="project" value="TreeGrafter"/>
</dbReference>
<dbReference type="GO" id="GO:0005730">
    <property type="term" value="C:nucleolus"/>
    <property type="evidence" value="ECO:0007669"/>
    <property type="project" value="UniProtKB-SubCell"/>
</dbReference>
<dbReference type="GO" id="GO:0005524">
    <property type="term" value="F:ATP binding"/>
    <property type="evidence" value="ECO:0007669"/>
    <property type="project" value="UniProtKB-KW"/>
</dbReference>
<dbReference type="GO" id="GO:0016887">
    <property type="term" value="F:ATP hydrolysis activity"/>
    <property type="evidence" value="ECO:0007669"/>
    <property type="project" value="RHEA"/>
</dbReference>
<dbReference type="GO" id="GO:0003723">
    <property type="term" value="F:RNA binding"/>
    <property type="evidence" value="ECO:0007669"/>
    <property type="project" value="UniProtKB-KW"/>
</dbReference>
<dbReference type="GO" id="GO:0003724">
    <property type="term" value="F:RNA helicase activity"/>
    <property type="evidence" value="ECO:0007669"/>
    <property type="project" value="UniProtKB-EC"/>
</dbReference>
<dbReference type="GO" id="GO:0006364">
    <property type="term" value="P:rRNA processing"/>
    <property type="evidence" value="ECO:0007669"/>
    <property type="project" value="UniProtKB-KW"/>
</dbReference>
<dbReference type="CDD" id="cd17959">
    <property type="entry name" value="DEADc_DDX54"/>
    <property type="match status" value="1"/>
</dbReference>
<dbReference type="CDD" id="cd18787">
    <property type="entry name" value="SF2_C_DEAD"/>
    <property type="match status" value="1"/>
</dbReference>
<dbReference type="FunFam" id="3.40.50.300:FF:000865">
    <property type="entry name" value="ATP-dependent RNA helicase DDX54"/>
    <property type="match status" value="1"/>
</dbReference>
<dbReference type="Gene3D" id="3.40.50.300">
    <property type="entry name" value="P-loop containing nucleotide triphosphate hydrolases"/>
    <property type="match status" value="2"/>
</dbReference>
<dbReference type="InterPro" id="IPR012541">
    <property type="entry name" value="DBP10_C"/>
</dbReference>
<dbReference type="InterPro" id="IPR033517">
    <property type="entry name" value="DDX54/DBP10_DEAD-box_helicase"/>
</dbReference>
<dbReference type="InterPro" id="IPR011545">
    <property type="entry name" value="DEAD/DEAH_box_helicase_dom"/>
</dbReference>
<dbReference type="InterPro" id="IPR050079">
    <property type="entry name" value="DEAD_box_RNA_helicase"/>
</dbReference>
<dbReference type="InterPro" id="IPR014001">
    <property type="entry name" value="Helicase_ATP-bd"/>
</dbReference>
<dbReference type="InterPro" id="IPR001650">
    <property type="entry name" value="Helicase_C-like"/>
</dbReference>
<dbReference type="InterPro" id="IPR027417">
    <property type="entry name" value="P-loop_NTPase"/>
</dbReference>
<dbReference type="InterPro" id="IPR000629">
    <property type="entry name" value="RNA-helicase_DEAD-box_CS"/>
</dbReference>
<dbReference type="InterPro" id="IPR014014">
    <property type="entry name" value="RNA_helicase_DEAD_Q_motif"/>
</dbReference>
<dbReference type="PANTHER" id="PTHR47959">
    <property type="entry name" value="ATP-DEPENDENT RNA HELICASE RHLE-RELATED"/>
    <property type="match status" value="1"/>
</dbReference>
<dbReference type="PANTHER" id="PTHR47959:SF8">
    <property type="entry name" value="RNA HELICASE"/>
    <property type="match status" value="1"/>
</dbReference>
<dbReference type="Pfam" id="PF08147">
    <property type="entry name" value="DBP10CT"/>
    <property type="match status" value="1"/>
</dbReference>
<dbReference type="Pfam" id="PF00270">
    <property type="entry name" value="DEAD"/>
    <property type="match status" value="1"/>
</dbReference>
<dbReference type="Pfam" id="PF00271">
    <property type="entry name" value="Helicase_C"/>
    <property type="match status" value="1"/>
</dbReference>
<dbReference type="SMART" id="SM01123">
    <property type="entry name" value="DBP10CT"/>
    <property type="match status" value="1"/>
</dbReference>
<dbReference type="SMART" id="SM00487">
    <property type="entry name" value="DEXDc"/>
    <property type="match status" value="1"/>
</dbReference>
<dbReference type="SMART" id="SM00490">
    <property type="entry name" value="HELICc"/>
    <property type="match status" value="1"/>
</dbReference>
<dbReference type="SUPFAM" id="SSF52540">
    <property type="entry name" value="P-loop containing nucleoside triphosphate hydrolases"/>
    <property type="match status" value="2"/>
</dbReference>
<dbReference type="PROSITE" id="PS00039">
    <property type="entry name" value="DEAD_ATP_HELICASE"/>
    <property type="match status" value="1"/>
</dbReference>
<dbReference type="PROSITE" id="PS51192">
    <property type="entry name" value="HELICASE_ATP_BIND_1"/>
    <property type="match status" value="1"/>
</dbReference>
<dbReference type="PROSITE" id="PS51194">
    <property type="entry name" value="HELICASE_CTER"/>
    <property type="match status" value="1"/>
</dbReference>
<dbReference type="PROSITE" id="PS51195">
    <property type="entry name" value="Q_MOTIF"/>
    <property type="match status" value="1"/>
</dbReference>
<feature type="chain" id="PRO_0000294666" description="ATP-dependent RNA helicase DBP10">
    <location>
        <begin position="1"/>
        <end position="914"/>
    </location>
</feature>
<feature type="domain" description="Helicase ATP-binding" evidence="2">
    <location>
        <begin position="121"/>
        <end position="293"/>
    </location>
</feature>
<feature type="domain" description="Helicase C-terminal" evidence="3">
    <location>
        <begin position="341"/>
        <end position="502"/>
    </location>
</feature>
<feature type="region of interest" description="Disordered" evidence="4">
    <location>
        <begin position="333"/>
        <end position="364"/>
    </location>
</feature>
<feature type="region of interest" description="Disordered" evidence="4">
    <location>
        <begin position="626"/>
        <end position="667"/>
    </location>
</feature>
<feature type="region of interest" description="Disordered" evidence="4">
    <location>
        <begin position="746"/>
        <end position="786"/>
    </location>
</feature>
<feature type="region of interest" description="Disordered" evidence="4">
    <location>
        <begin position="807"/>
        <end position="857"/>
    </location>
</feature>
<feature type="region of interest" description="Disordered" evidence="4">
    <location>
        <begin position="872"/>
        <end position="891"/>
    </location>
</feature>
<feature type="short sequence motif" description="Q motif">
    <location>
        <begin position="90"/>
        <end position="118"/>
    </location>
</feature>
<feature type="short sequence motif" description="DEAD box">
    <location>
        <begin position="241"/>
        <end position="244"/>
    </location>
</feature>
<feature type="compositionally biased region" description="Basic and acidic residues" evidence="4">
    <location>
        <begin position="338"/>
        <end position="347"/>
    </location>
</feature>
<feature type="compositionally biased region" description="Basic and acidic residues" evidence="4">
    <location>
        <begin position="354"/>
        <end position="364"/>
    </location>
</feature>
<feature type="compositionally biased region" description="Acidic residues" evidence="4">
    <location>
        <begin position="657"/>
        <end position="667"/>
    </location>
</feature>
<feature type="compositionally biased region" description="Polar residues" evidence="4">
    <location>
        <begin position="748"/>
        <end position="757"/>
    </location>
</feature>
<feature type="compositionally biased region" description="Basic and acidic residues" evidence="4">
    <location>
        <begin position="758"/>
        <end position="777"/>
    </location>
</feature>
<feature type="compositionally biased region" description="Gly residues" evidence="4">
    <location>
        <begin position="825"/>
        <end position="837"/>
    </location>
</feature>
<feature type="compositionally biased region" description="Basic and acidic residues" evidence="4">
    <location>
        <begin position="842"/>
        <end position="857"/>
    </location>
</feature>
<feature type="binding site" evidence="2">
    <location>
        <begin position="134"/>
        <end position="141"/>
    </location>
    <ligand>
        <name>ATP</name>
        <dbReference type="ChEBI" id="CHEBI:30616"/>
    </ligand>
</feature>
<keyword id="KW-0067">ATP-binding</keyword>
<keyword id="KW-0347">Helicase</keyword>
<keyword id="KW-0378">Hydrolase</keyword>
<keyword id="KW-0547">Nucleotide-binding</keyword>
<keyword id="KW-0539">Nucleus</keyword>
<keyword id="KW-1185">Reference proteome</keyword>
<keyword id="KW-0690">Ribosome biogenesis</keyword>
<keyword id="KW-0694">RNA-binding</keyword>
<keyword id="KW-0698">rRNA processing</keyword>
<protein>
    <recommendedName>
        <fullName>ATP-dependent RNA helicase DBP10</fullName>
        <ecNumber>3.6.4.13</ecNumber>
    </recommendedName>
</protein>
<gene>
    <name type="primary">DBP10</name>
    <name type="ORF">MGG_04179</name>
</gene>
<evidence type="ECO:0000250" key="1"/>
<evidence type="ECO:0000255" key="2">
    <source>
        <dbReference type="PROSITE-ProRule" id="PRU00541"/>
    </source>
</evidence>
<evidence type="ECO:0000255" key="3">
    <source>
        <dbReference type="PROSITE-ProRule" id="PRU00542"/>
    </source>
</evidence>
<evidence type="ECO:0000256" key="4">
    <source>
        <dbReference type="SAM" id="MobiDB-lite"/>
    </source>
</evidence>
<evidence type="ECO:0000305" key="5"/>
<name>DBP10_PYRO7</name>
<reference key="1">
    <citation type="journal article" date="2005" name="Nature">
        <title>The genome sequence of the rice blast fungus Magnaporthe grisea.</title>
        <authorList>
            <person name="Dean R.A."/>
            <person name="Talbot N.J."/>
            <person name="Ebbole D.J."/>
            <person name="Farman M.L."/>
            <person name="Mitchell T.K."/>
            <person name="Orbach M.J."/>
            <person name="Thon M.R."/>
            <person name="Kulkarni R."/>
            <person name="Xu J.-R."/>
            <person name="Pan H."/>
            <person name="Read N.D."/>
            <person name="Lee Y.-H."/>
            <person name="Carbone I."/>
            <person name="Brown D."/>
            <person name="Oh Y.Y."/>
            <person name="Donofrio N."/>
            <person name="Jeong J.S."/>
            <person name="Soanes D.M."/>
            <person name="Djonovic S."/>
            <person name="Kolomiets E."/>
            <person name="Rehmeyer C."/>
            <person name="Li W."/>
            <person name="Harding M."/>
            <person name="Kim S."/>
            <person name="Lebrun M.-H."/>
            <person name="Bohnert H."/>
            <person name="Coughlan S."/>
            <person name="Butler J."/>
            <person name="Calvo S.E."/>
            <person name="Ma L.-J."/>
            <person name="Nicol R."/>
            <person name="Purcell S."/>
            <person name="Nusbaum C."/>
            <person name="Galagan J.E."/>
            <person name="Birren B.W."/>
        </authorList>
    </citation>
    <scope>NUCLEOTIDE SEQUENCE [LARGE SCALE GENOMIC DNA]</scope>
    <source>
        <strain>70-15 / ATCC MYA-4617 / FGSC 8958</strain>
    </source>
</reference>
<sequence length="914" mass="100728">MPRRAASPAASEHEIDILGSIFANDNDTEVKAKAKKRTGGHDEIDLDIDALLNGAEDGGDGDDEALIALQQAASFRKTTNLKGKTGKKSGGFQAMGLNPSLLQAITRKGFAVPTPIQRKSIPLILDRRDVVGMARTGSGKTAAFVIPMIERLRAHSARVGARALIMSPSRELALQTLKVVKEFGKGTDLKTVLLVGGDSLEDQFGFMTTNPDIIIATPGRFLHLKVEMSLDLSSIKYVVFDEADRLFEMGFATQLTEILHSLPPSRQTLLFSATLPRSLVEFARAGLQDPSLVRLDAETKISPDLESAFFSVKGAEKEGALLHILQDVIKMPTGTPEGFKEDKDEGSKKRKRGPDRPNAKEKPTEHSTIIFTATKFHVEYLTSILVQAGYAVSHAYGALDQTARKIQVEDFRRGKTNILVVTDVAARGIDIPVLANVINYDFCDQPKVFVHRVGRTARAGQKGWSYSLVSDIDAPYLLDLQLFLGRRLVVGQDTSAGANFASDVVLGALQRNSIETNVEWVEKVVQESHDIALMRSVVVKAQKQYLRTRVSASSQSAKRARELTASRAWSQPHLIFGINTDDTEALRVEMLAKISGFKPQETVFEIGHGGKGTISEAVEVMKQLRKRAPVRKSKTDKDADDEDEDVPVIKRAKSDESSDEDASFDEDDFVAVNDDSDEELEVTVSNNADSAKNASAWRDSEHFMTYTPRQSNVAEERGYGVNAGSNGANFLEAARDVAMDIANDEKSTSFGAPTRTTMRWDKKNAKYVSRAHDEDGSRGNTKMIRGESGVKIAASFKSGRFDRWRKDNRLGKLPGVGEAETGLPRGMGGGGFGGGGRRFNHKREDAPKEADKFRDDYHVRKKRVAEAKEKRIGKFRDGEGSKREIKNNDDIRKARKIKELKMRKNARPARKKKN</sequence>